<organism>
    <name type="scientific">Yersinia pestis</name>
    <dbReference type="NCBI Taxonomy" id="632"/>
    <lineage>
        <taxon>Bacteria</taxon>
        <taxon>Pseudomonadati</taxon>
        <taxon>Pseudomonadota</taxon>
        <taxon>Gammaproteobacteria</taxon>
        <taxon>Enterobacterales</taxon>
        <taxon>Yersiniaceae</taxon>
        <taxon>Yersinia</taxon>
    </lineage>
</organism>
<sequence>MEGTGLLTAVLVFLFAAVVAVPIAQRLGIGAVLGYLIAGIAIGPWGLGFIRDVDEILHFSELGVVFLMFIIGLELNPAKLWQLRRSIFGVGAGQVVITAAVLGALLYFTQFAWQAAVIGGVGLAMSSTAMALQLMREKGMNRNEGGQLGFSVLLFQDMAVIPALALIPILAGNEGGANDWVKIGLKIAAFAGMLIGGRYLLRPLFRYIVASGVREVFTAAALLVVLGSALFMDALGLSMALGTFIAGILLAESEFQHELEIAIEPFKGLLLGLFFISVGMALDLGVLFTHLLDVLLGVLALVFIKSAILYGLARVFGLRRSVRLQFAGVLSQGGEFAFVLFSAAFSQRVLNAEQLALLLVVVTLSMMTTPLLMQVIDRILVRRYNAQEESDEKPFVEDNDPQVIIVGFGRFGQVIGRLLMANKMRITVLERDVSAVSMMRKYGYKVYYGDATELELLRAAGAEKAKAIVITCNEPEDTMALVHLCQQHFPNLHILARARGRVEAHELLQNGVKDFTRETFSSALELGRKTLLELGMHPHQAYRAQQHFRRLDMRMLRELMPQHHGDVAQISRIKEARRELEDIFQREMLHESRQLDGWDEYE</sequence>
<protein>
    <recommendedName>
        <fullName evidence="1">Glutathione-regulated potassium-efflux system protein KefB</fullName>
    </recommendedName>
    <alternativeName>
        <fullName evidence="1">K(+)/H(+) antiporter</fullName>
    </alternativeName>
</protein>
<reference key="1">
    <citation type="journal article" date="2001" name="Nature">
        <title>Genome sequence of Yersinia pestis, the causative agent of plague.</title>
        <authorList>
            <person name="Parkhill J."/>
            <person name="Wren B.W."/>
            <person name="Thomson N.R."/>
            <person name="Titball R.W."/>
            <person name="Holden M.T.G."/>
            <person name="Prentice M.B."/>
            <person name="Sebaihia M."/>
            <person name="James K.D."/>
            <person name="Churcher C.M."/>
            <person name="Mungall K.L."/>
            <person name="Baker S."/>
            <person name="Basham D."/>
            <person name="Bentley S.D."/>
            <person name="Brooks K."/>
            <person name="Cerdeno-Tarraga A.-M."/>
            <person name="Chillingworth T."/>
            <person name="Cronin A."/>
            <person name="Davies R.M."/>
            <person name="Davis P."/>
            <person name="Dougan G."/>
            <person name="Feltwell T."/>
            <person name="Hamlin N."/>
            <person name="Holroyd S."/>
            <person name="Jagels K."/>
            <person name="Karlyshev A.V."/>
            <person name="Leather S."/>
            <person name="Moule S."/>
            <person name="Oyston P.C.F."/>
            <person name="Quail M.A."/>
            <person name="Rutherford K.M."/>
            <person name="Simmonds M."/>
            <person name="Skelton J."/>
            <person name="Stevens K."/>
            <person name="Whitehead S."/>
            <person name="Barrell B.G."/>
        </authorList>
    </citation>
    <scope>NUCLEOTIDE SEQUENCE [LARGE SCALE GENOMIC DNA]</scope>
    <source>
        <strain>CO-92 / Biovar Orientalis</strain>
    </source>
</reference>
<reference key="2">
    <citation type="journal article" date="2002" name="J. Bacteriol.">
        <title>Genome sequence of Yersinia pestis KIM.</title>
        <authorList>
            <person name="Deng W."/>
            <person name="Burland V."/>
            <person name="Plunkett G. III"/>
            <person name="Boutin A."/>
            <person name="Mayhew G.F."/>
            <person name="Liss P."/>
            <person name="Perna N.T."/>
            <person name="Rose D.J."/>
            <person name="Mau B."/>
            <person name="Zhou S."/>
            <person name="Schwartz D.C."/>
            <person name="Fetherston J.D."/>
            <person name="Lindler L.E."/>
            <person name="Brubaker R.R."/>
            <person name="Plano G.V."/>
            <person name="Straley S.C."/>
            <person name="McDonough K.A."/>
            <person name="Nilles M.L."/>
            <person name="Matson J.S."/>
            <person name="Blattner F.R."/>
            <person name="Perry R.D."/>
        </authorList>
    </citation>
    <scope>NUCLEOTIDE SEQUENCE [LARGE SCALE GENOMIC DNA]</scope>
    <source>
        <strain>KIM10+ / Biovar Mediaevalis</strain>
    </source>
</reference>
<reference key="3">
    <citation type="journal article" date="2004" name="DNA Res.">
        <title>Complete genome sequence of Yersinia pestis strain 91001, an isolate avirulent to humans.</title>
        <authorList>
            <person name="Song Y."/>
            <person name="Tong Z."/>
            <person name="Wang J."/>
            <person name="Wang L."/>
            <person name="Guo Z."/>
            <person name="Han Y."/>
            <person name="Zhang J."/>
            <person name="Pei D."/>
            <person name="Zhou D."/>
            <person name="Qin H."/>
            <person name="Pang X."/>
            <person name="Han Y."/>
            <person name="Zhai J."/>
            <person name="Li M."/>
            <person name="Cui B."/>
            <person name="Qi Z."/>
            <person name="Jin L."/>
            <person name="Dai R."/>
            <person name="Chen F."/>
            <person name="Li S."/>
            <person name="Ye C."/>
            <person name="Du Z."/>
            <person name="Lin W."/>
            <person name="Wang J."/>
            <person name="Yu J."/>
            <person name="Yang H."/>
            <person name="Wang J."/>
            <person name="Huang P."/>
            <person name="Yang R."/>
        </authorList>
    </citation>
    <scope>NUCLEOTIDE SEQUENCE [LARGE SCALE GENOMIC DNA]</scope>
    <source>
        <strain>91001 / Biovar Mediaevalis</strain>
    </source>
</reference>
<gene>
    <name evidence="1" type="primary">kefB</name>
    <name type="ordered locus">YPO0191</name>
    <name type="ordered locus">y3972</name>
    <name type="ordered locus">YP_0189</name>
</gene>
<accession>Q8ZJC4</accession>
<accession>Q0WKB5</accession>
<keyword id="KW-0050">Antiport</keyword>
<keyword id="KW-0997">Cell inner membrane</keyword>
<keyword id="KW-1003">Cell membrane</keyword>
<keyword id="KW-0406">Ion transport</keyword>
<keyword id="KW-0472">Membrane</keyword>
<keyword id="KW-0630">Potassium</keyword>
<keyword id="KW-0633">Potassium transport</keyword>
<keyword id="KW-1185">Reference proteome</keyword>
<keyword id="KW-0812">Transmembrane</keyword>
<keyword id="KW-1133">Transmembrane helix</keyword>
<keyword id="KW-0813">Transport</keyword>
<name>KEFB_YERPE</name>
<feature type="chain" id="PRO_0000196604" description="Glutathione-regulated potassium-efflux system protein KefB">
    <location>
        <begin position="1"/>
        <end position="602"/>
    </location>
</feature>
<feature type="transmembrane region" description="Helical" evidence="1">
    <location>
        <begin position="4"/>
        <end position="24"/>
    </location>
</feature>
<feature type="transmembrane region" description="Helical" evidence="1">
    <location>
        <begin position="29"/>
        <end position="49"/>
    </location>
</feature>
<feature type="transmembrane region" description="Helical" evidence="1">
    <location>
        <begin position="55"/>
        <end position="75"/>
    </location>
</feature>
<feature type="transmembrane region" description="Helical" evidence="1">
    <location>
        <begin position="87"/>
        <end position="107"/>
    </location>
</feature>
<feature type="transmembrane region" description="Helical" evidence="1">
    <location>
        <begin position="115"/>
        <end position="135"/>
    </location>
</feature>
<feature type="transmembrane region" description="Helical" evidence="1">
    <location>
        <begin position="152"/>
        <end position="172"/>
    </location>
</feature>
<feature type="transmembrane region" description="Helical" evidence="1">
    <location>
        <begin position="181"/>
        <end position="201"/>
    </location>
</feature>
<feature type="transmembrane region" description="Helical" evidence="1">
    <location>
        <begin position="207"/>
        <end position="227"/>
    </location>
</feature>
<feature type="transmembrane region" description="Helical" evidence="1">
    <location>
        <begin position="230"/>
        <end position="250"/>
    </location>
</feature>
<feature type="transmembrane region" description="Helical" evidence="1">
    <location>
        <begin position="261"/>
        <end position="281"/>
    </location>
</feature>
<feature type="transmembrane region" description="Helical" evidence="1">
    <location>
        <begin position="296"/>
        <end position="318"/>
    </location>
</feature>
<feature type="transmembrane region" description="Helical" evidence="1">
    <location>
        <begin position="326"/>
        <end position="346"/>
    </location>
</feature>
<feature type="transmembrane region" description="Helical" evidence="1">
    <location>
        <begin position="356"/>
        <end position="376"/>
    </location>
</feature>
<feature type="domain" description="RCK N-terminal" evidence="2">
    <location>
        <begin position="400"/>
        <end position="519"/>
    </location>
</feature>
<dbReference type="EMBL" id="AL590842">
    <property type="protein sequence ID" value="CAL18875.1"/>
    <property type="molecule type" value="Genomic_DNA"/>
</dbReference>
<dbReference type="EMBL" id="AE009952">
    <property type="protein sequence ID" value="AAM87516.1"/>
    <property type="molecule type" value="Genomic_DNA"/>
</dbReference>
<dbReference type="EMBL" id="AE017042">
    <property type="protein sequence ID" value="AAS60465.1"/>
    <property type="molecule type" value="Genomic_DNA"/>
</dbReference>
<dbReference type="PIR" id="AB0024">
    <property type="entry name" value="AB0024"/>
</dbReference>
<dbReference type="RefSeq" id="WP_002212314.1">
    <property type="nucleotide sequence ID" value="NZ_WUCM01000004.1"/>
</dbReference>
<dbReference type="RefSeq" id="YP_002345273.1">
    <property type="nucleotide sequence ID" value="NC_003143.1"/>
</dbReference>
<dbReference type="SMR" id="Q8ZJC4"/>
<dbReference type="IntAct" id="Q8ZJC4">
    <property type="interactions" value="4"/>
</dbReference>
<dbReference type="STRING" id="214092.YPO0191"/>
<dbReference type="PaxDb" id="214092-YPO0191"/>
<dbReference type="DNASU" id="1148919"/>
<dbReference type="EnsemblBacteria" id="AAS60465">
    <property type="protein sequence ID" value="AAS60465"/>
    <property type="gene ID" value="YP_0189"/>
</dbReference>
<dbReference type="GeneID" id="57974412"/>
<dbReference type="KEGG" id="ype:YPO0191"/>
<dbReference type="KEGG" id="ypk:y3972"/>
<dbReference type="KEGG" id="ypm:YP_0189"/>
<dbReference type="PATRIC" id="fig|214092.21.peg.423"/>
<dbReference type="eggNOG" id="COG0475">
    <property type="taxonomic scope" value="Bacteria"/>
</dbReference>
<dbReference type="eggNOG" id="COG1226">
    <property type="taxonomic scope" value="Bacteria"/>
</dbReference>
<dbReference type="HOGENOM" id="CLU_005126_9_3_6"/>
<dbReference type="OMA" id="AHFRKLD"/>
<dbReference type="OrthoDB" id="9781411at2"/>
<dbReference type="Proteomes" id="UP000000815">
    <property type="component" value="Chromosome"/>
</dbReference>
<dbReference type="Proteomes" id="UP000001019">
    <property type="component" value="Chromosome"/>
</dbReference>
<dbReference type="Proteomes" id="UP000002490">
    <property type="component" value="Chromosome"/>
</dbReference>
<dbReference type="GO" id="GO:0005886">
    <property type="term" value="C:plasma membrane"/>
    <property type="evidence" value="ECO:0000318"/>
    <property type="project" value="GO_Central"/>
</dbReference>
<dbReference type="GO" id="GO:0015503">
    <property type="term" value="F:glutathione-regulated potassium exporter activity"/>
    <property type="evidence" value="ECO:0007669"/>
    <property type="project" value="UniProtKB-UniRule"/>
</dbReference>
<dbReference type="GO" id="GO:1902600">
    <property type="term" value="P:proton transmembrane transport"/>
    <property type="evidence" value="ECO:0007669"/>
    <property type="project" value="InterPro"/>
</dbReference>
<dbReference type="FunFam" id="1.20.1530.20:FF:000001">
    <property type="entry name" value="Glutathione-regulated potassium-efflux system protein KefB"/>
    <property type="match status" value="1"/>
</dbReference>
<dbReference type="FunFam" id="3.40.50.720:FF:000036">
    <property type="entry name" value="Glutathione-regulated potassium-efflux system protein KefB"/>
    <property type="match status" value="1"/>
</dbReference>
<dbReference type="Gene3D" id="1.20.1530.20">
    <property type="match status" value="1"/>
</dbReference>
<dbReference type="Gene3D" id="3.40.50.720">
    <property type="entry name" value="NAD(P)-binding Rossmann-like Domain"/>
    <property type="match status" value="1"/>
</dbReference>
<dbReference type="HAMAP" id="MF_01412">
    <property type="entry name" value="K_H_efflux_KefB"/>
    <property type="match status" value="1"/>
</dbReference>
<dbReference type="InterPro" id="IPR006153">
    <property type="entry name" value="Cation/H_exchanger_TM"/>
</dbReference>
<dbReference type="InterPro" id="IPR004771">
    <property type="entry name" value="K/H_exchanger"/>
</dbReference>
<dbReference type="InterPro" id="IPR020884">
    <property type="entry name" value="K_H_efflux_KefB"/>
</dbReference>
<dbReference type="InterPro" id="IPR038770">
    <property type="entry name" value="Na+/solute_symporter_sf"/>
</dbReference>
<dbReference type="InterPro" id="IPR036291">
    <property type="entry name" value="NAD(P)-bd_dom_sf"/>
</dbReference>
<dbReference type="InterPro" id="IPR003148">
    <property type="entry name" value="RCK_N"/>
</dbReference>
<dbReference type="NCBIfam" id="TIGR00932">
    <property type="entry name" value="2a37"/>
    <property type="match status" value="1"/>
</dbReference>
<dbReference type="NCBIfam" id="NF002973">
    <property type="entry name" value="PRK03659.1"/>
    <property type="match status" value="1"/>
</dbReference>
<dbReference type="PANTHER" id="PTHR46157">
    <property type="entry name" value="K(+) EFFLUX ANTIPORTER 3, CHLOROPLASTIC"/>
    <property type="match status" value="1"/>
</dbReference>
<dbReference type="PANTHER" id="PTHR46157:SF4">
    <property type="entry name" value="K(+) EFFLUX ANTIPORTER 3, CHLOROPLASTIC"/>
    <property type="match status" value="1"/>
</dbReference>
<dbReference type="Pfam" id="PF00999">
    <property type="entry name" value="Na_H_Exchanger"/>
    <property type="match status" value="1"/>
</dbReference>
<dbReference type="Pfam" id="PF02254">
    <property type="entry name" value="TrkA_N"/>
    <property type="match status" value="1"/>
</dbReference>
<dbReference type="SUPFAM" id="SSF51735">
    <property type="entry name" value="NAD(P)-binding Rossmann-fold domains"/>
    <property type="match status" value="1"/>
</dbReference>
<dbReference type="PROSITE" id="PS51201">
    <property type="entry name" value="RCK_N"/>
    <property type="match status" value="1"/>
</dbReference>
<comment type="function">
    <text evidence="1">Pore-forming subunit of a potassium efflux system that confers protection against electrophiles. Catalyzes K(+)/H(+) antiport.</text>
</comment>
<comment type="subunit">
    <text evidence="1">Interacts with the regulatory subunit KefG.</text>
</comment>
<comment type="subcellular location">
    <subcellularLocation>
        <location evidence="1">Cell inner membrane</location>
        <topology evidence="1">Multi-pass membrane protein</topology>
    </subcellularLocation>
</comment>
<comment type="similarity">
    <text evidence="1">Belongs to the monovalent cation:proton antiporter 2 (CPA2) transporter (TC 2.A.37) family. KefB subfamily.</text>
</comment>
<evidence type="ECO:0000255" key="1">
    <source>
        <dbReference type="HAMAP-Rule" id="MF_01412"/>
    </source>
</evidence>
<evidence type="ECO:0000255" key="2">
    <source>
        <dbReference type="PROSITE-ProRule" id="PRU00543"/>
    </source>
</evidence>
<proteinExistence type="inferred from homology"/>